<reference key="1">
    <citation type="journal article" date="2001" name="J. Bacteriol.">
        <title>Genome of the bacterium Streptococcus pneumoniae strain R6.</title>
        <authorList>
            <person name="Hoskins J."/>
            <person name="Alborn W.E. Jr."/>
            <person name="Arnold J."/>
            <person name="Blaszczak L.C."/>
            <person name="Burgett S."/>
            <person name="DeHoff B.S."/>
            <person name="Estrem S.T."/>
            <person name="Fritz L."/>
            <person name="Fu D.-J."/>
            <person name="Fuller W."/>
            <person name="Geringer C."/>
            <person name="Gilmour R."/>
            <person name="Glass J.S."/>
            <person name="Khoja H."/>
            <person name="Kraft A.R."/>
            <person name="Lagace R.E."/>
            <person name="LeBlanc D.J."/>
            <person name="Lee L.N."/>
            <person name="Lefkowitz E.J."/>
            <person name="Lu J."/>
            <person name="Matsushima P."/>
            <person name="McAhren S.M."/>
            <person name="McHenney M."/>
            <person name="McLeaster K."/>
            <person name="Mundy C.W."/>
            <person name="Nicas T.I."/>
            <person name="Norris F.H."/>
            <person name="O'Gara M."/>
            <person name="Peery R.B."/>
            <person name="Robertson G.T."/>
            <person name="Rockey P."/>
            <person name="Sun P.-M."/>
            <person name="Winkler M.E."/>
            <person name="Yang Y."/>
            <person name="Young-Bellido M."/>
            <person name="Zhao G."/>
            <person name="Zook C.A."/>
            <person name="Baltz R.H."/>
            <person name="Jaskunas S.R."/>
            <person name="Rosteck P.R. Jr."/>
            <person name="Skatrud P.L."/>
            <person name="Glass J.I."/>
        </authorList>
    </citation>
    <scope>NUCLEOTIDE SEQUENCE [LARGE SCALE GENOMIC DNA]</scope>
    <source>
        <strain>ATCC BAA-255 / R6</strain>
    </source>
</reference>
<organism>
    <name type="scientific">Streptococcus pneumoniae (strain ATCC BAA-255 / R6)</name>
    <dbReference type="NCBI Taxonomy" id="171101"/>
    <lineage>
        <taxon>Bacteria</taxon>
        <taxon>Bacillati</taxon>
        <taxon>Bacillota</taxon>
        <taxon>Bacilli</taxon>
        <taxon>Lactobacillales</taxon>
        <taxon>Streptococcaceae</taxon>
        <taxon>Streptococcus</taxon>
    </lineage>
</organism>
<accession>Q8CWQ7</accession>
<name>AROA_STRR6</name>
<feature type="chain" id="PRO_0000088305" description="3-phosphoshikimate 1-carboxyvinyltransferase">
    <location>
        <begin position="1"/>
        <end position="427"/>
    </location>
</feature>
<feature type="active site" description="Proton acceptor" evidence="1">
    <location>
        <position position="312"/>
    </location>
</feature>
<feature type="binding site" evidence="1">
    <location>
        <position position="20"/>
    </location>
    <ligand>
        <name>3-phosphoshikimate</name>
        <dbReference type="ChEBI" id="CHEBI:145989"/>
    </ligand>
</feature>
<feature type="binding site" evidence="1">
    <location>
        <position position="20"/>
    </location>
    <ligand>
        <name>phosphoenolpyruvate</name>
        <dbReference type="ChEBI" id="CHEBI:58702"/>
    </ligand>
</feature>
<feature type="binding site" evidence="1">
    <location>
        <position position="21"/>
    </location>
    <ligand>
        <name>3-phosphoshikimate</name>
        <dbReference type="ChEBI" id="CHEBI:145989"/>
    </ligand>
</feature>
<feature type="binding site" evidence="1">
    <location>
        <position position="25"/>
    </location>
    <ligand>
        <name>3-phosphoshikimate</name>
        <dbReference type="ChEBI" id="CHEBI:145989"/>
    </ligand>
</feature>
<feature type="binding site" evidence="1">
    <location>
        <position position="92"/>
    </location>
    <ligand>
        <name>phosphoenolpyruvate</name>
        <dbReference type="ChEBI" id="CHEBI:58702"/>
    </ligand>
</feature>
<feature type="binding site" evidence="1">
    <location>
        <position position="120"/>
    </location>
    <ligand>
        <name>phosphoenolpyruvate</name>
        <dbReference type="ChEBI" id="CHEBI:58702"/>
    </ligand>
</feature>
<feature type="binding site" evidence="1">
    <location>
        <position position="166"/>
    </location>
    <ligand>
        <name>3-phosphoshikimate</name>
        <dbReference type="ChEBI" id="CHEBI:145989"/>
    </ligand>
</feature>
<feature type="binding site" evidence="1">
    <location>
        <position position="168"/>
    </location>
    <ligand>
        <name>3-phosphoshikimate</name>
        <dbReference type="ChEBI" id="CHEBI:145989"/>
    </ligand>
</feature>
<feature type="binding site" evidence="1">
    <location>
        <position position="168"/>
    </location>
    <ligand>
        <name>phosphoenolpyruvate</name>
        <dbReference type="ChEBI" id="CHEBI:58702"/>
    </ligand>
</feature>
<feature type="binding site" evidence="1">
    <location>
        <position position="312"/>
    </location>
    <ligand>
        <name>3-phosphoshikimate</name>
        <dbReference type="ChEBI" id="CHEBI:145989"/>
    </ligand>
</feature>
<feature type="binding site" evidence="1">
    <location>
        <position position="339"/>
    </location>
    <ligand>
        <name>3-phosphoshikimate</name>
        <dbReference type="ChEBI" id="CHEBI:145989"/>
    </ligand>
</feature>
<feature type="binding site" evidence="1">
    <location>
        <position position="343"/>
    </location>
    <ligand>
        <name>phosphoenolpyruvate</name>
        <dbReference type="ChEBI" id="CHEBI:58702"/>
    </ligand>
</feature>
<feature type="binding site" evidence="1">
    <location>
        <position position="385"/>
    </location>
    <ligand>
        <name>phosphoenolpyruvate</name>
        <dbReference type="ChEBI" id="CHEBI:58702"/>
    </ligand>
</feature>
<sequence length="427" mass="45720">MKLKTNIRHLHGSIRVPGDKSISHRSIIFGSLAEGETKVYDILRGEDVLSTMQVFRDLGVEIEDKDGVITIQGVGMAGLKAPQNALNMGNSGTSIRLISGVLAGADFEVEMFGDDSLSKRPMDRVTLPLKKMGVSISGQTERDLPPLRLKGTKNLRPIHYELPIASAQVKSALMFAALQAKGESVIIEKECTRNHTEDMLKQFGGHLSVDGKKITVQGPQKLTGQKVVVPGDISSAAFWLVAGLINPNSHLVLQNVGINETRTGIIDVIRAMGGKLEVTEIDPVAKSSTLTVESSDLKGTEIGGALIPRLIDELPIIALLATQAQGVTVIKDAEELKVKETDRIQVVADALNSMGADITPTADGMIIKGKSALHGARVNTFGDHRIGMMTAIAALLVADGEVELDRAEAINTSYPSFFDDLESLIHG</sequence>
<comment type="function">
    <text evidence="1">Catalyzes the transfer of the enolpyruvyl moiety of phosphoenolpyruvate (PEP) to the 5-hydroxyl of shikimate-3-phosphate (S3P) to produce enolpyruvyl shikimate-3-phosphate and inorganic phosphate.</text>
</comment>
<comment type="catalytic activity">
    <reaction evidence="1">
        <text>3-phosphoshikimate + phosphoenolpyruvate = 5-O-(1-carboxyvinyl)-3-phosphoshikimate + phosphate</text>
        <dbReference type="Rhea" id="RHEA:21256"/>
        <dbReference type="ChEBI" id="CHEBI:43474"/>
        <dbReference type="ChEBI" id="CHEBI:57701"/>
        <dbReference type="ChEBI" id="CHEBI:58702"/>
        <dbReference type="ChEBI" id="CHEBI:145989"/>
        <dbReference type="EC" id="2.5.1.19"/>
    </reaction>
    <physiologicalReaction direction="left-to-right" evidence="1">
        <dbReference type="Rhea" id="RHEA:21257"/>
    </physiologicalReaction>
</comment>
<comment type="pathway">
    <text evidence="1">Metabolic intermediate biosynthesis; chorismate biosynthesis; chorismate from D-erythrose 4-phosphate and phosphoenolpyruvate: step 6/7.</text>
</comment>
<comment type="subunit">
    <text evidence="1">Monomer.</text>
</comment>
<comment type="subcellular location">
    <subcellularLocation>
        <location evidence="1">Cytoplasm</location>
    </subcellularLocation>
</comment>
<comment type="similarity">
    <text evidence="1">Belongs to the EPSP synthase family.</text>
</comment>
<comment type="sequence caution" evidence="2">
    <conflict type="erroneous initiation">
        <sequence resource="EMBL-CDS" id="AAL00033"/>
    </conflict>
    <text>Extended N-terminus.</text>
</comment>
<keyword id="KW-0028">Amino-acid biosynthesis</keyword>
<keyword id="KW-0057">Aromatic amino acid biosynthesis</keyword>
<keyword id="KW-0963">Cytoplasm</keyword>
<keyword id="KW-1185">Reference proteome</keyword>
<keyword id="KW-0808">Transferase</keyword>
<gene>
    <name evidence="1" type="primary">aroA</name>
    <name type="ordered locus">spr1229</name>
</gene>
<evidence type="ECO:0000255" key="1">
    <source>
        <dbReference type="HAMAP-Rule" id="MF_00210"/>
    </source>
</evidence>
<evidence type="ECO:0000305" key="2"/>
<protein>
    <recommendedName>
        <fullName evidence="1">3-phosphoshikimate 1-carboxyvinyltransferase</fullName>
        <ecNumber evidence="1">2.5.1.19</ecNumber>
    </recommendedName>
    <alternativeName>
        <fullName evidence="1">5-enolpyruvylshikimate-3-phosphate synthase</fullName>
        <shortName evidence="1">EPSP synthase</shortName>
        <shortName evidence="1">EPSPS</shortName>
    </alternativeName>
</protein>
<proteinExistence type="inferred from homology"/>
<dbReference type="EC" id="2.5.1.19" evidence="1"/>
<dbReference type="EMBL" id="AE007317">
    <property type="protein sequence ID" value="AAL00033.1"/>
    <property type="status" value="ALT_INIT"/>
    <property type="molecule type" value="Genomic_DNA"/>
</dbReference>
<dbReference type="PIR" id="D98025">
    <property type="entry name" value="D98025"/>
</dbReference>
<dbReference type="RefSeq" id="NP_358822.1">
    <property type="nucleotide sequence ID" value="NC_003098.1"/>
</dbReference>
<dbReference type="RefSeq" id="WP_001819694.1">
    <property type="nucleotide sequence ID" value="NC_003098.1"/>
</dbReference>
<dbReference type="SMR" id="Q8CWQ7"/>
<dbReference type="STRING" id="171101.spr1229"/>
<dbReference type="KEGG" id="spr:spr1229"/>
<dbReference type="PATRIC" id="fig|171101.6.peg.1335"/>
<dbReference type="eggNOG" id="COG0128">
    <property type="taxonomic scope" value="Bacteria"/>
</dbReference>
<dbReference type="HOGENOM" id="CLU_024321_0_1_9"/>
<dbReference type="UniPathway" id="UPA00053">
    <property type="reaction ID" value="UER00089"/>
</dbReference>
<dbReference type="Proteomes" id="UP000000586">
    <property type="component" value="Chromosome"/>
</dbReference>
<dbReference type="GO" id="GO:0005737">
    <property type="term" value="C:cytoplasm"/>
    <property type="evidence" value="ECO:0007669"/>
    <property type="project" value="UniProtKB-SubCell"/>
</dbReference>
<dbReference type="GO" id="GO:0003866">
    <property type="term" value="F:3-phosphoshikimate 1-carboxyvinyltransferase activity"/>
    <property type="evidence" value="ECO:0000318"/>
    <property type="project" value="GO_Central"/>
</dbReference>
<dbReference type="GO" id="GO:0008652">
    <property type="term" value="P:amino acid biosynthetic process"/>
    <property type="evidence" value="ECO:0007669"/>
    <property type="project" value="UniProtKB-KW"/>
</dbReference>
<dbReference type="GO" id="GO:0009073">
    <property type="term" value="P:aromatic amino acid family biosynthetic process"/>
    <property type="evidence" value="ECO:0007669"/>
    <property type="project" value="UniProtKB-KW"/>
</dbReference>
<dbReference type="GO" id="GO:0009423">
    <property type="term" value="P:chorismate biosynthetic process"/>
    <property type="evidence" value="ECO:0000318"/>
    <property type="project" value="GO_Central"/>
</dbReference>
<dbReference type="CDD" id="cd01554">
    <property type="entry name" value="EPT-like"/>
    <property type="match status" value="1"/>
</dbReference>
<dbReference type="FunFam" id="3.65.10.10:FF:000005">
    <property type="entry name" value="3-phosphoshikimate 1-carboxyvinyltransferase"/>
    <property type="match status" value="1"/>
</dbReference>
<dbReference type="FunFam" id="3.65.10.10:FF:000006">
    <property type="entry name" value="3-phosphoshikimate 1-carboxyvinyltransferase"/>
    <property type="match status" value="1"/>
</dbReference>
<dbReference type="Gene3D" id="3.65.10.10">
    <property type="entry name" value="Enolpyruvate transferase domain"/>
    <property type="match status" value="2"/>
</dbReference>
<dbReference type="HAMAP" id="MF_00210">
    <property type="entry name" value="EPSP_synth"/>
    <property type="match status" value="1"/>
</dbReference>
<dbReference type="InterPro" id="IPR001986">
    <property type="entry name" value="Enolpyruvate_Tfrase_dom"/>
</dbReference>
<dbReference type="InterPro" id="IPR036968">
    <property type="entry name" value="Enolpyruvate_Tfrase_sf"/>
</dbReference>
<dbReference type="InterPro" id="IPR006264">
    <property type="entry name" value="EPSP_synthase"/>
</dbReference>
<dbReference type="InterPro" id="IPR023193">
    <property type="entry name" value="EPSP_synthase_CS"/>
</dbReference>
<dbReference type="InterPro" id="IPR013792">
    <property type="entry name" value="RNA3'P_cycl/enolpyr_Trfase_a/b"/>
</dbReference>
<dbReference type="NCBIfam" id="TIGR01356">
    <property type="entry name" value="aroA"/>
    <property type="match status" value="1"/>
</dbReference>
<dbReference type="PANTHER" id="PTHR21090">
    <property type="entry name" value="AROM/DEHYDROQUINATE SYNTHASE"/>
    <property type="match status" value="1"/>
</dbReference>
<dbReference type="PANTHER" id="PTHR21090:SF5">
    <property type="entry name" value="PENTAFUNCTIONAL AROM POLYPEPTIDE"/>
    <property type="match status" value="1"/>
</dbReference>
<dbReference type="Pfam" id="PF00275">
    <property type="entry name" value="EPSP_synthase"/>
    <property type="match status" value="1"/>
</dbReference>
<dbReference type="PIRSF" id="PIRSF000505">
    <property type="entry name" value="EPSPS"/>
    <property type="match status" value="1"/>
</dbReference>
<dbReference type="SUPFAM" id="SSF55205">
    <property type="entry name" value="EPT/RTPC-like"/>
    <property type="match status" value="1"/>
</dbReference>
<dbReference type="PROSITE" id="PS00104">
    <property type="entry name" value="EPSP_SYNTHASE_1"/>
    <property type="match status" value="1"/>
</dbReference>
<dbReference type="PROSITE" id="PS00885">
    <property type="entry name" value="EPSP_SYNTHASE_2"/>
    <property type="match status" value="1"/>
</dbReference>